<protein>
    <recommendedName>
        <fullName evidence="3">Caerulein precursor fragment R2</fullName>
    </recommendedName>
    <alternativeName>
        <fullName evidence="3">CPF-R2</fullName>
    </alternativeName>
</protein>
<dbReference type="GO" id="GO:0005576">
    <property type="term" value="C:extracellular region"/>
    <property type="evidence" value="ECO:0007669"/>
    <property type="project" value="UniProtKB-SubCell"/>
</dbReference>
<dbReference type="GO" id="GO:0006952">
    <property type="term" value="P:defense response"/>
    <property type="evidence" value="ECO:0007669"/>
    <property type="project" value="UniProtKB-KW"/>
</dbReference>
<organism evidence="3">
    <name type="scientific">Xenopus ruwenzoriensis</name>
    <name type="common">Uganda clawed frog</name>
    <dbReference type="NCBI Taxonomy" id="105430"/>
    <lineage>
        <taxon>Eukaryota</taxon>
        <taxon>Metazoa</taxon>
        <taxon>Chordata</taxon>
        <taxon>Craniata</taxon>
        <taxon>Vertebrata</taxon>
        <taxon>Euteleostomi</taxon>
        <taxon>Amphibia</taxon>
        <taxon>Batrachia</taxon>
        <taxon>Anura</taxon>
        <taxon>Pipoidea</taxon>
        <taxon>Pipidae</taxon>
        <taxon>Xenopodinae</taxon>
        <taxon>Xenopus</taxon>
        <taxon>Xenopus</taxon>
    </lineage>
</organism>
<reference evidence="4" key="1">
    <citation type="journal article" date="2016" name="Comp. Biochem. Physiol.">
        <title>Peptidomic analysis of the extensive array of host-defense peptides in skin secretions of the dodecaploid frog Xenopus ruwenzoriensis (Pipidae).</title>
        <authorList>
            <person name="Coquet L."/>
            <person name="Kolodziejek J."/>
            <person name="Jouenne T."/>
            <person name="Nowotny N."/>
            <person name="King J.D."/>
            <person name="Conlon J.M."/>
        </authorList>
    </citation>
    <scope>PROTEIN SEQUENCE</scope>
    <scope>SUBCELLULAR LOCATION</scope>
    <scope>MASS SPECTROMETRY</scope>
    <source>
        <tissue evidence="3">Skin secretion</tissue>
    </source>
</reference>
<feature type="peptide" id="PRO_0000440912" description="Caerulein precursor fragment R2" evidence="2">
    <location>
        <begin position="1"/>
        <end position="27"/>
    </location>
</feature>
<evidence type="ECO:0000250" key="1">
    <source>
        <dbReference type="UniProtKB" id="C0HK89"/>
    </source>
</evidence>
<evidence type="ECO:0000269" key="2">
    <source>
    </source>
</evidence>
<evidence type="ECO:0000303" key="3">
    <source>
    </source>
</evidence>
<evidence type="ECO:0000305" key="4"/>
<evidence type="ECO:0000305" key="5">
    <source>
    </source>
</evidence>
<accession>C0HKM6</accession>
<name>CPFR2_XENRU</name>
<proteinExistence type="evidence at protein level"/>
<sequence length="27" mass="2580">GFGSLLGKALKAGLKLGANLLGGAPQQ</sequence>
<comment type="function">
    <text evidence="1">Antimicrobial peptide.</text>
</comment>
<comment type="subcellular location">
    <subcellularLocation>
        <location evidence="2">Secreted</location>
    </subcellularLocation>
</comment>
<comment type="tissue specificity">
    <text evidence="5">Expressed by the skin glands.</text>
</comment>
<comment type="mass spectrometry" mass="2579.5" method="MALDI" evidence="2"/>
<comment type="similarity">
    <text evidence="4">Belongs to the gastrin/cholecystokinin family.</text>
</comment>
<keyword id="KW-0878">Amphibian defense peptide</keyword>
<keyword id="KW-0929">Antimicrobial</keyword>
<keyword id="KW-0903">Direct protein sequencing</keyword>
<keyword id="KW-0964">Secreted</keyword>